<protein>
    <recommendedName>
        <fullName>Zinc metalloproteinase nas-27</fullName>
        <ecNumber evidence="1">3.4.24.-</ecNumber>
    </recommendedName>
    <alternativeName>
        <fullName>Nematode astacin 27</fullName>
    </alternativeName>
</protein>
<accession>O17264</accession>
<accession>Q7Z0M4</accession>
<reference key="1">
    <citation type="journal article" date="1998" name="Science">
        <title>Genome sequence of the nematode C. elegans: a platform for investigating biology.</title>
        <authorList>
            <consortium name="The C. elegans sequencing consortium"/>
        </authorList>
    </citation>
    <scope>NUCLEOTIDE SEQUENCE [LARGE SCALE GENOMIC DNA]</scope>
    <source>
        <strain>Bristol N2</strain>
    </source>
</reference>
<reference key="2">
    <citation type="journal article" date="2003" name="Eur. J. Biochem.">
        <title>The astacin protein family in Caenorhabditis elegans.</title>
        <authorList>
            <person name="Moehrlen F."/>
            <person name="Hutter H."/>
            <person name="Zwilling R."/>
        </authorList>
    </citation>
    <scope>NUCLEOTIDE SEQUENCE [MRNA] OF 200-229</scope>
    <scope>NOMENCLATURE</scope>
    <source>
        <strain>Bristol N2</strain>
    </source>
</reference>
<name>NAS27_CAEEL</name>
<sequence length="428" mass="48983">MQILPIFFPLLITSLHAIPRGRRAVRNRNEGDINSLVGVGQYLYQGDIAVVKSRARRAVIRQKHKKWKLPMPYSFDRNFPSRSRQRVLEAMQFWSEKTCVTFHENRYVYPHVSIFEGNGCWSFVGKQPSLREQSLSLERSCTDHTFVVAHEIAHTLGFYHEHARGDRDQFISIDYSNVNPNLTFAFAKESEKQLDHQEAAYEYGSVMHYSVDQFAVNTNRPVIYARDQKFAQAMGNRMRATFQDVSRMNVLYNCHERCANTLNRCQQGGYPAPSDCSQCVCPDGFGGNFCETIEAHSVGQKDNSDCGGVLWASETSQTFYGAVRTRVHSNSVLPTPEHCFWHIRASQGKSIEIQIKNIISPCSMSCSFNALELKLSNFTMTGPRFCCDEHIYNRYSQPKVFQSEGPLAVIGAYARYDYLDFNIEYRAV</sequence>
<proteinExistence type="evidence at transcript level"/>
<keyword id="KW-0165">Cleavage on pair of basic residues</keyword>
<keyword id="KW-1015">Disulfide bond</keyword>
<keyword id="KW-0245">EGF-like domain</keyword>
<keyword id="KW-0325">Glycoprotein</keyword>
<keyword id="KW-0378">Hydrolase</keyword>
<keyword id="KW-0479">Metal-binding</keyword>
<keyword id="KW-0482">Metalloprotease</keyword>
<keyword id="KW-0645">Protease</keyword>
<keyword id="KW-1185">Reference proteome</keyword>
<keyword id="KW-0964">Secreted</keyword>
<keyword id="KW-0732">Signal</keyword>
<keyword id="KW-0862">Zinc</keyword>
<keyword id="KW-0865">Zymogen</keyword>
<organism>
    <name type="scientific">Caenorhabditis elegans</name>
    <dbReference type="NCBI Taxonomy" id="6239"/>
    <lineage>
        <taxon>Eukaryota</taxon>
        <taxon>Metazoa</taxon>
        <taxon>Ecdysozoa</taxon>
        <taxon>Nematoda</taxon>
        <taxon>Chromadorea</taxon>
        <taxon>Rhabditida</taxon>
        <taxon>Rhabditina</taxon>
        <taxon>Rhabditomorpha</taxon>
        <taxon>Rhabditoidea</taxon>
        <taxon>Rhabditidae</taxon>
        <taxon>Peloderinae</taxon>
        <taxon>Caenorhabditis</taxon>
    </lineage>
</organism>
<dbReference type="EC" id="3.4.24.-" evidence="1"/>
<dbReference type="EMBL" id="FO081745">
    <property type="protein sequence ID" value="CCD73622.1"/>
    <property type="molecule type" value="Genomic_DNA"/>
</dbReference>
<dbReference type="EMBL" id="AJ561216">
    <property type="protein sequence ID" value="CAD99217.1"/>
    <property type="molecule type" value="mRNA"/>
</dbReference>
<dbReference type="PIR" id="T32401">
    <property type="entry name" value="T32401"/>
</dbReference>
<dbReference type="RefSeq" id="NP_493926.2">
    <property type="nucleotide sequence ID" value="NM_061525.4"/>
</dbReference>
<dbReference type="SMR" id="O17264"/>
<dbReference type="FunCoup" id="O17264">
    <property type="interactions" value="4"/>
</dbReference>
<dbReference type="STRING" id="6239.T23F4.4.1"/>
<dbReference type="MEROPS" id="M12.A44"/>
<dbReference type="GlyCosmos" id="O17264">
    <property type="glycosylation" value="2 sites, No reported glycans"/>
</dbReference>
<dbReference type="PaxDb" id="6239-T23F4.4"/>
<dbReference type="EnsemblMetazoa" id="T23F4.4.1">
    <property type="protein sequence ID" value="T23F4.4.1"/>
    <property type="gene ID" value="WBGene00003545"/>
</dbReference>
<dbReference type="GeneID" id="188809"/>
<dbReference type="KEGG" id="cel:CELE_T23F4.4"/>
<dbReference type="UCSC" id="T23F4.4">
    <property type="organism name" value="c. elegans"/>
</dbReference>
<dbReference type="AGR" id="WB:WBGene00003545"/>
<dbReference type="CTD" id="188809"/>
<dbReference type="WormBase" id="T23F4.4">
    <property type="protein sequence ID" value="CE36020"/>
    <property type="gene ID" value="WBGene00003545"/>
    <property type="gene designation" value="nas-27"/>
</dbReference>
<dbReference type="eggNOG" id="KOG3714">
    <property type="taxonomic scope" value="Eukaryota"/>
</dbReference>
<dbReference type="GeneTree" id="ENSGT00940000168554"/>
<dbReference type="HOGENOM" id="CLU_017286_1_5_1"/>
<dbReference type="InParanoid" id="O17264"/>
<dbReference type="OMA" id="CCDEHIY"/>
<dbReference type="OrthoDB" id="5826793at2759"/>
<dbReference type="PhylomeDB" id="O17264"/>
<dbReference type="PRO" id="PR:O17264"/>
<dbReference type="Proteomes" id="UP000001940">
    <property type="component" value="Chromosome II"/>
</dbReference>
<dbReference type="Bgee" id="WBGene00003545">
    <property type="expression patterns" value="Expressed in larva and 1 other cell type or tissue"/>
</dbReference>
<dbReference type="GO" id="GO:0005576">
    <property type="term" value="C:extracellular region"/>
    <property type="evidence" value="ECO:0007669"/>
    <property type="project" value="UniProtKB-SubCell"/>
</dbReference>
<dbReference type="GO" id="GO:0004222">
    <property type="term" value="F:metalloendopeptidase activity"/>
    <property type="evidence" value="ECO:0000318"/>
    <property type="project" value="GO_Central"/>
</dbReference>
<dbReference type="GO" id="GO:0008270">
    <property type="term" value="F:zinc ion binding"/>
    <property type="evidence" value="ECO:0007669"/>
    <property type="project" value="InterPro"/>
</dbReference>
<dbReference type="GO" id="GO:0018996">
    <property type="term" value="P:molting cycle, collagen and cuticulin-based cuticle"/>
    <property type="evidence" value="ECO:0007669"/>
    <property type="project" value="InterPro"/>
</dbReference>
<dbReference type="GO" id="GO:0006508">
    <property type="term" value="P:proteolysis"/>
    <property type="evidence" value="ECO:0007669"/>
    <property type="project" value="UniProtKB-KW"/>
</dbReference>
<dbReference type="CDD" id="cd04280">
    <property type="entry name" value="ZnMc_astacin_like"/>
    <property type="match status" value="1"/>
</dbReference>
<dbReference type="FunFam" id="3.40.390.10:FF:000062">
    <property type="entry name" value="Zinc metalloproteinase"/>
    <property type="match status" value="1"/>
</dbReference>
<dbReference type="Gene3D" id="3.40.390.10">
    <property type="entry name" value="Collagenase (Catalytic Domain)"/>
    <property type="match status" value="1"/>
</dbReference>
<dbReference type="Gene3D" id="2.60.120.290">
    <property type="entry name" value="Spermadhesin, CUB domain"/>
    <property type="match status" value="1"/>
</dbReference>
<dbReference type="InterPro" id="IPR034035">
    <property type="entry name" value="Astacin-like_dom"/>
</dbReference>
<dbReference type="InterPro" id="IPR000859">
    <property type="entry name" value="CUB_dom"/>
</dbReference>
<dbReference type="InterPro" id="IPR000742">
    <property type="entry name" value="EGF-like_dom"/>
</dbReference>
<dbReference type="InterPro" id="IPR024079">
    <property type="entry name" value="MetalloPept_cat_dom_sf"/>
</dbReference>
<dbReference type="InterPro" id="IPR017050">
    <property type="entry name" value="Metallopeptidase_nem"/>
</dbReference>
<dbReference type="InterPro" id="IPR001506">
    <property type="entry name" value="Peptidase_M12A"/>
</dbReference>
<dbReference type="InterPro" id="IPR006026">
    <property type="entry name" value="Peptidase_Metallo"/>
</dbReference>
<dbReference type="InterPro" id="IPR035914">
    <property type="entry name" value="Sperma_CUB_dom_sf"/>
</dbReference>
<dbReference type="PANTHER" id="PTHR10127">
    <property type="entry name" value="DISCOIDIN, CUB, EGF, LAMININ , AND ZINC METALLOPROTEASE DOMAIN CONTAINING"/>
    <property type="match status" value="1"/>
</dbReference>
<dbReference type="PANTHER" id="PTHR10127:SF862">
    <property type="entry name" value="ZINC METALLOPROTEINASE NAS-27"/>
    <property type="match status" value="1"/>
</dbReference>
<dbReference type="Pfam" id="PF01400">
    <property type="entry name" value="Astacin"/>
    <property type="match status" value="1"/>
</dbReference>
<dbReference type="PIRSF" id="PIRSF036365">
    <property type="entry name" value="Astacin_nematoda"/>
    <property type="match status" value="1"/>
</dbReference>
<dbReference type="PRINTS" id="PR00480">
    <property type="entry name" value="ASTACIN"/>
</dbReference>
<dbReference type="SMART" id="SM00235">
    <property type="entry name" value="ZnMc"/>
    <property type="match status" value="1"/>
</dbReference>
<dbReference type="SUPFAM" id="SSF55486">
    <property type="entry name" value="Metalloproteases ('zincins'), catalytic domain"/>
    <property type="match status" value="1"/>
</dbReference>
<dbReference type="SUPFAM" id="SSF49854">
    <property type="entry name" value="Spermadhesin, CUB domain"/>
    <property type="match status" value="1"/>
</dbReference>
<dbReference type="PROSITE" id="PS51864">
    <property type="entry name" value="ASTACIN"/>
    <property type="match status" value="1"/>
</dbReference>
<dbReference type="PROSITE" id="PS01180">
    <property type="entry name" value="CUB"/>
    <property type="match status" value="1"/>
</dbReference>
<dbReference type="PROSITE" id="PS00022">
    <property type="entry name" value="EGF_1"/>
    <property type="match status" value="1"/>
</dbReference>
<dbReference type="PROSITE" id="PS01186">
    <property type="entry name" value="EGF_2"/>
    <property type="match status" value="1"/>
</dbReference>
<dbReference type="PROSITE" id="PS00142">
    <property type="entry name" value="ZINC_PROTEASE"/>
    <property type="match status" value="1"/>
</dbReference>
<feature type="signal peptide" evidence="2">
    <location>
        <begin position="1"/>
        <end position="17"/>
    </location>
</feature>
<feature type="propeptide" id="PRO_0000442674" evidence="2">
    <location>
        <begin position="18"/>
        <end position="57"/>
    </location>
</feature>
<feature type="chain" id="PRO_0000028931" description="Zinc metalloproteinase nas-27">
    <location>
        <begin position="58"/>
        <end position="428"/>
    </location>
</feature>
<feature type="domain" description="Peptidase M12A" evidence="4">
    <location>
        <begin position="58"/>
        <end position="255"/>
    </location>
</feature>
<feature type="domain" description="EGF-like">
    <location>
        <begin position="250"/>
        <end position="291"/>
    </location>
</feature>
<feature type="domain" description="CUB" evidence="3">
    <location>
        <begin position="306"/>
        <end position="428"/>
    </location>
</feature>
<feature type="active site" evidence="4">
    <location>
        <position position="151"/>
    </location>
</feature>
<feature type="binding site" evidence="4">
    <location>
        <position position="150"/>
    </location>
    <ligand>
        <name>Zn(2+)</name>
        <dbReference type="ChEBI" id="CHEBI:29105"/>
        <note>catalytic</note>
    </ligand>
</feature>
<feature type="binding site" evidence="4">
    <location>
        <position position="154"/>
    </location>
    <ligand>
        <name>Zn(2+)</name>
        <dbReference type="ChEBI" id="CHEBI:29105"/>
        <note>catalytic</note>
    </ligand>
</feature>
<feature type="binding site" evidence="4">
    <location>
        <position position="160"/>
    </location>
    <ligand>
        <name>Zn(2+)</name>
        <dbReference type="ChEBI" id="CHEBI:29105"/>
        <note>catalytic</note>
    </ligand>
</feature>
<feature type="glycosylation site" description="N-linked (GlcNAc...) asparagine" evidence="2">
    <location>
        <position position="181"/>
    </location>
</feature>
<feature type="glycosylation site" description="N-linked (GlcNAc...) asparagine" evidence="2">
    <location>
        <position position="377"/>
    </location>
</feature>
<feature type="disulfide bond" evidence="4">
    <location>
        <begin position="99"/>
        <end position="254"/>
    </location>
</feature>
<feature type="disulfide bond" evidence="4">
    <location>
        <begin position="120"/>
        <end position="141"/>
    </location>
</feature>
<feature type="disulfide bond" evidence="3">
    <location>
        <begin position="258"/>
        <end position="276"/>
    </location>
</feature>
<feature type="disulfide bond" evidence="3">
    <location>
        <begin position="281"/>
        <end position="290"/>
    </location>
</feature>
<feature type="disulfide bond" evidence="3">
    <location>
        <begin position="306"/>
        <end position="339"/>
    </location>
</feature>
<feature type="disulfide bond" evidence="3">
    <location>
        <begin position="366"/>
        <end position="386"/>
    </location>
</feature>
<evidence type="ECO:0000250" key="1">
    <source>
        <dbReference type="UniProtKB" id="A8Q2D1"/>
    </source>
</evidence>
<evidence type="ECO:0000255" key="2"/>
<evidence type="ECO:0000255" key="3">
    <source>
        <dbReference type="PROSITE-ProRule" id="PRU00059"/>
    </source>
</evidence>
<evidence type="ECO:0000255" key="4">
    <source>
        <dbReference type="PROSITE-ProRule" id="PRU01211"/>
    </source>
</evidence>
<evidence type="ECO:0000305" key="5"/>
<gene>
    <name type="primary">nas-27</name>
    <name type="ORF">T23F4.4</name>
</gene>
<comment type="function">
    <text evidence="1">Metalloprotease.</text>
</comment>
<comment type="cofactor">
    <cofactor evidence="4">
        <name>Zn(2+)</name>
        <dbReference type="ChEBI" id="CHEBI:29105"/>
    </cofactor>
    <text evidence="4">Binds 1 zinc ion per subunit.</text>
</comment>
<comment type="subcellular location">
    <subcellularLocation>
        <location evidence="5">Secreted</location>
    </subcellularLocation>
</comment>